<sequence>MAAKIRQNDEVIVLTGKDKGKRGKVTKVLPNGKVFVEGINIITKHEKPVPALGKAGGLVKKEAAIDASNVAIFNPKTNKADRVGFRFEDGKKVRFFKSNNEII</sequence>
<proteinExistence type="inferred from homology"/>
<protein>
    <recommendedName>
        <fullName evidence="1">Large ribosomal subunit protein uL24</fullName>
    </recommendedName>
    <alternativeName>
        <fullName evidence="2">50S ribosomal protein L24</fullName>
    </alternativeName>
</protein>
<reference key="1">
    <citation type="journal article" date="2007" name="Genome Biol.">
        <title>Characterization and modeling of the Haemophilus influenzae core and supragenomes based on the complete genomic sequences of Rd and 12 clinical nontypeable strains.</title>
        <authorList>
            <person name="Hogg J.S."/>
            <person name="Hu F.Z."/>
            <person name="Janto B."/>
            <person name="Boissy R."/>
            <person name="Hayes J."/>
            <person name="Keefe R."/>
            <person name="Post J.C."/>
            <person name="Ehrlich G.D."/>
        </authorList>
    </citation>
    <scope>NUCLEOTIDE SEQUENCE [LARGE SCALE GENOMIC DNA]</scope>
    <source>
        <strain>PittGG</strain>
    </source>
</reference>
<feature type="chain" id="PRO_1000052222" description="Large ribosomal subunit protein uL24">
    <location>
        <begin position="1"/>
        <end position="103"/>
    </location>
</feature>
<organism>
    <name type="scientific">Haemophilus influenzae (strain PittGG)</name>
    <dbReference type="NCBI Taxonomy" id="374931"/>
    <lineage>
        <taxon>Bacteria</taxon>
        <taxon>Pseudomonadati</taxon>
        <taxon>Pseudomonadota</taxon>
        <taxon>Gammaproteobacteria</taxon>
        <taxon>Pasteurellales</taxon>
        <taxon>Pasteurellaceae</taxon>
        <taxon>Haemophilus</taxon>
    </lineage>
</organism>
<evidence type="ECO:0000255" key="1">
    <source>
        <dbReference type="HAMAP-Rule" id="MF_01326"/>
    </source>
</evidence>
<evidence type="ECO:0000305" key="2"/>
<accession>A5UHU2</accession>
<name>RL24_HAEIG</name>
<gene>
    <name evidence="1" type="primary">rplX</name>
    <name type="ordered locus">CGSHiGG_07445</name>
</gene>
<comment type="function">
    <text evidence="1">One of two assembly initiator proteins, it binds directly to the 5'-end of the 23S rRNA, where it nucleates assembly of the 50S subunit.</text>
</comment>
<comment type="function">
    <text evidence="1">One of the proteins that surrounds the polypeptide exit tunnel on the outside of the subunit.</text>
</comment>
<comment type="subunit">
    <text evidence="1">Part of the 50S ribosomal subunit.</text>
</comment>
<comment type="similarity">
    <text evidence="1">Belongs to the universal ribosomal protein uL24 family.</text>
</comment>
<keyword id="KW-0687">Ribonucleoprotein</keyword>
<keyword id="KW-0689">Ribosomal protein</keyword>
<keyword id="KW-0694">RNA-binding</keyword>
<keyword id="KW-0699">rRNA-binding</keyword>
<dbReference type="EMBL" id="CP000672">
    <property type="protein sequence ID" value="ABR00348.1"/>
    <property type="molecule type" value="Genomic_DNA"/>
</dbReference>
<dbReference type="SMR" id="A5UHU2"/>
<dbReference type="KEGG" id="hiq:CGSHiGG_07445"/>
<dbReference type="HOGENOM" id="CLU_093315_2_2_6"/>
<dbReference type="Proteomes" id="UP000001990">
    <property type="component" value="Chromosome"/>
</dbReference>
<dbReference type="GO" id="GO:1990904">
    <property type="term" value="C:ribonucleoprotein complex"/>
    <property type="evidence" value="ECO:0007669"/>
    <property type="project" value="UniProtKB-KW"/>
</dbReference>
<dbReference type="GO" id="GO:0005840">
    <property type="term" value="C:ribosome"/>
    <property type="evidence" value="ECO:0007669"/>
    <property type="project" value="UniProtKB-KW"/>
</dbReference>
<dbReference type="GO" id="GO:0019843">
    <property type="term" value="F:rRNA binding"/>
    <property type="evidence" value="ECO:0007669"/>
    <property type="project" value="UniProtKB-UniRule"/>
</dbReference>
<dbReference type="GO" id="GO:0003735">
    <property type="term" value="F:structural constituent of ribosome"/>
    <property type="evidence" value="ECO:0007669"/>
    <property type="project" value="InterPro"/>
</dbReference>
<dbReference type="GO" id="GO:0006412">
    <property type="term" value="P:translation"/>
    <property type="evidence" value="ECO:0007669"/>
    <property type="project" value="UniProtKB-UniRule"/>
</dbReference>
<dbReference type="CDD" id="cd06089">
    <property type="entry name" value="KOW_RPL26"/>
    <property type="match status" value="1"/>
</dbReference>
<dbReference type="FunFam" id="2.30.30.30:FF:000004">
    <property type="entry name" value="50S ribosomal protein L24"/>
    <property type="match status" value="1"/>
</dbReference>
<dbReference type="Gene3D" id="2.30.30.30">
    <property type="match status" value="1"/>
</dbReference>
<dbReference type="HAMAP" id="MF_01326_B">
    <property type="entry name" value="Ribosomal_uL24_B"/>
    <property type="match status" value="1"/>
</dbReference>
<dbReference type="InterPro" id="IPR005824">
    <property type="entry name" value="KOW"/>
</dbReference>
<dbReference type="InterPro" id="IPR014722">
    <property type="entry name" value="Rib_uL2_dom2"/>
</dbReference>
<dbReference type="InterPro" id="IPR003256">
    <property type="entry name" value="Ribosomal_uL24"/>
</dbReference>
<dbReference type="InterPro" id="IPR005825">
    <property type="entry name" value="Ribosomal_uL24_CS"/>
</dbReference>
<dbReference type="InterPro" id="IPR041988">
    <property type="entry name" value="Ribosomal_uL24_KOW"/>
</dbReference>
<dbReference type="InterPro" id="IPR008991">
    <property type="entry name" value="Translation_prot_SH3-like_sf"/>
</dbReference>
<dbReference type="NCBIfam" id="TIGR01079">
    <property type="entry name" value="rplX_bact"/>
    <property type="match status" value="1"/>
</dbReference>
<dbReference type="PANTHER" id="PTHR12903">
    <property type="entry name" value="MITOCHONDRIAL RIBOSOMAL PROTEIN L24"/>
    <property type="match status" value="1"/>
</dbReference>
<dbReference type="Pfam" id="PF00467">
    <property type="entry name" value="KOW"/>
    <property type="match status" value="1"/>
</dbReference>
<dbReference type="Pfam" id="PF17136">
    <property type="entry name" value="ribosomal_L24"/>
    <property type="match status" value="1"/>
</dbReference>
<dbReference type="SMART" id="SM00739">
    <property type="entry name" value="KOW"/>
    <property type="match status" value="1"/>
</dbReference>
<dbReference type="SUPFAM" id="SSF50104">
    <property type="entry name" value="Translation proteins SH3-like domain"/>
    <property type="match status" value="1"/>
</dbReference>
<dbReference type="PROSITE" id="PS01108">
    <property type="entry name" value="RIBOSOMAL_L24"/>
    <property type="match status" value="1"/>
</dbReference>